<organism>
    <name type="scientific">Albidiferax ferrireducens (strain ATCC BAA-621 / DSM 15236 / T118)</name>
    <name type="common">Rhodoferax ferrireducens</name>
    <dbReference type="NCBI Taxonomy" id="338969"/>
    <lineage>
        <taxon>Bacteria</taxon>
        <taxon>Pseudomonadati</taxon>
        <taxon>Pseudomonadota</taxon>
        <taxon>Betaproteobacteria</taxon>
        <taxon>Burkholderiales</taxon>
        <taxon>Comamonadaceae</taxon>
        <taxon>Rhodoferax</taxon>
    </lineage>
</organism>
<dbReference type="EMBL" id="CP000267">
    <property type="protein sequence ID" value="ABD69380.1"/>
    <property type="molecule type" value="Genomic_DNA"/>
</dbReference>
<dbReference type="RefSeq" id="WP_011463948.1">
    <property type="nucleotide sequence ID" value="NC_007908.1"/>
</dbReference>
<dbReference type="SMR" id="Q21XX3"/>
<dbReference type="STRING" id="338969.Rfer_1650"/>
<dbReference type="KEGG" id="rfr:Rfer_1650"/>
<dbReference type="eggNOG" id="COG1420">
    <property type="taxonomic scope" value="Bacteria"/>
</dbReference>
<dbReference type="HOGENOM" id="CLU_050019_0_0_4"/>
<dbReference type="OrthoDB" id="9783139at2"/>
<dbReference type="Proteomes" id="UP000008332">
    <property type="component" value="Chromosome"/>
</dbReference>
<dbReference type="GO" id="GO:0003677">
    <property type="term" value="F:DNA binding"/>
    <property type="evidence" value="ECO:0007669"/>
    <property type="project" value="InterPro"/>
</dbReference>
<dbReference type="GO" id="GO:0045892">
    <property type="term" value="P:negative regulation of DNA-templated transcription"/>
    <property type="evidence" value="ECO:0007669"/>
    <property type="project" value="UniProtKB-UniRule"/>
</dbReference>
<dbReference type="Gene3D" id="3.30.450.40">
    <property type="match status" value="1"/>
</dbReference>
<dbReference type="Gene3D" id="3.30.390.60">
    <property type="entry name" value="Heat-inducible transcription repressor hrca homolog, domain 3"/>
    <property type="match status" value="1"/>
</dbReference>
<dbReference type="Gene3D" id="1.10.10.10">
    <property type="entry name" value="Winged helix-like DNA-binding domain superfamily/Winged helix DNA-binding domain"/>
    <property type="match status" value="1"/>
</dbReference>
<dbReference type="HAMAP" id="MF_00081">
    <property type="entry name" value="HrcA"/>
    <property type="match status" value="1"/>
</dbReference>
<dbReference type="InterPro" id="IPR029016">
    <property type="entry name" value="GAF-like_dom_sf"/>
</dbReference>
<dbReference type="InterPro" id="IPR002571">
    <property type="entry name" value="HrcA"/>
</dbReference>
<dbReference type="InterPro" id="IPR021153">
    <property type="entry name" value="HrcA_C"/>
</dbReference>
<dbReference type="InterPro" id="IPR036388">
    <property type="entry name" value="WH-like_DNA-bd_sf"/>
</dbReference>
<dbReference type="InterPro" id="IPR036390">
    <property type="entry name" value="WH_DNA-bd_sf"/>
</dbReference>
<dbReference type="InterPro" id="IPR005104">
    <property type="entry name" value="WHTH_HrcA_DNA-bd"/>
</dbReference>
<dbReference type="InterPro" id="IPR023120">
    <property type="entry name" value="WHTH_transcript_rep_HrcA_IDD"/>
</dbReference>
<dbReference type="NCBIfam" id="TIGR00331">
    <property type="entry name" value="hrcA"/>
    <property type="match status" value="1"/>
</dbReference>
<dbReference type="PANTHER" id="PTHR34824">
    <property type="entry name" value="HEAT-INDUCIBLE TRANSCRIPTION REPRESSOR HRCA"/>
    <property type="match status" value="1"/>
</dbReference>
<dbReference type="PANTHER" id="PTHR34824:SF1">
    <property type="entry name" value="HEAT-INDUCIBLE TRANSCRIPTION REPRESSOR HRCA"/>
    <property type="match status" value="1"/>
</dbReference>
<dbReference type="Pfam" id="PF01628">
    <property type="entry name" value="HrcA"/>
    <property type="match status" value="1"/>
</dbReference>
<dbReference type="Pfam" id="PF03444">
    <property type="entry name" value="HrcA_DNA-bdg"/>
    <property type="match status" value="1"/>
</dbReference>
<dbReference type="PIRSF" id="PIRSF005485">
    <property type="entry name" value="HrcA"/>
    <property type="match status" value="1"/>
</dbReference>
<dbReference type="SUPFAM" id="SSF55781">
    <property type="entry name" value="GAF domain-like"/>
    <property type="match status" value="1"/>
</dbReference>
<dbReference type="SUPFAM" id="SSF46785">
    <property type="entry name" value="Winged helix' DNA-binding domain"/>
    <property type="match status" value="1"/>
</dbReference>
<gene>
    <name evidence="1" type="primary">hrcA</name>
    <name type="ordered locus">Rfer_1650</name>
</gene>
<comment type="function">
    <text evidence="1">Negative regulator of class I heat shock genes (grpE-dnaK-dnaJ and groELS operons). Prevents heat-shock induction of these operons.</text>
</comment>
<comment type="similarity">
    <text evidence="1">Belongs to the HrcA family.</text>
</comment>
<proteinExistence type="inferred from homology"/>
<name>HRCA_ALBFT</name>
<reference key="1">
    <citation type="submission" date="2006-02" db="EMBL/GenBank/DDBJ databases">
        <title>Complete sequence of chromosome of Rhodoferax ferrireducens DSM 15236.</title>
        <authorList>
            <person name="Copeland A."/>
            <person name="Lucas S."/>
            <person name="Lapidus A."/>
            <person name="Barry K."/>
            <person name="Detter J.C."/>
            <person name="Glavina del Rio T."/>
            <person name="Hammon N."/>
            <person name="Israni S."/>
            <person name="Pitluck S."/>
            <person name="Brettin T."/>
            <person name="Bruce D."/>
            <person name="Han C."/>
            <person name="Tapia R."/>
            <person name="Gilna P."/>
            <person name="Kiss H."/>
            <person name="Schmutz J."/>
            <person name="Larimer F."/>
            <person name="Land M."/>
            <person name="Kyrpides N."/>
            <person name="Ivanova N."/>
            <person name="Richardson P."/>
        </authorList>
    </citation>
    <scope>NUCLEOTIDE SEQUENCE [LARGE SCALE GENOMIC DNA]</scope>
    <source>
        <strain>ATCC BAA-621 / DSM 15236 / T118</strain>
    </source>
</reference>
<accession>Q21XX3</accession>
<sequence length="334" mass="36823">MLDDRAKLLLKALVERYIADGQPVGSRTLSKASGLELSPATIRNVMSDLEDLGLIVSPHTSAGRIPTARGYRLFVDTMLTVRQEQFAAHVLAPDQPQKVISNAANLLSSLSQFVGVVIAPRRSSVFRHIEFLRLSERRLLVIIVSPEGDVQNRVIFTETDYSQAQLIEAANYLNSHYVGLAIEQVRERLKNEVESLRSEIASLMQAAVAVSSEAMSETQDEVVISGERNLLAVTDFSNDMGHLRRAFDLFEQKAQLMRLLDIAGQAEGVRIFIGGESQVVPFEDLSIVSAPYEVDGQVVGTLGVIGPTRMAYDRMIQIVDITSKLVSNALSYHK</sequence>
<keyword id="KW-1185">Reference proteome</keyword>
<keyword id="KW-0678">Repressor</keyword>
<keyword id="KW-0346">Stress response</keyword>
<keyword id="KW-0804">Transcription</keyword>
<keyword id="KW-0805">Transcription regulation</keyword>
<evidence type="ECO:0000255" key="1">
    <source>
        <dbReference type="HAMAP-Rule" id="MF_00081"/>
    </source>
</evidence>
<feature type="chain" id="PRO_1000118313" description="Heat-inducible transcription repressor HrcA">
    <location>
        <begin position="1"/>
        <end position="334"/>
    </location>
</feature>
<protein>
    <recommendedName>
        <fullName evidence="1">Heat-inducible transcription repressor HrcA</fullName>
    </recommendedName>
</protein>